<organism>
    <name type="scientific">Arthrobacter sp</name>
    <dbReference type="NCBI Taxonomy" id="1667"/>
    <lineage>
        <taxon>Bacteria</taxon>
        <taxon>Bacillati</taxon>
        <taxon>Actinomycetota</taxon>
        <taxon>Actinomycetes</taxon>
        <taxon>Micrococcales</taxon>
        <taxon>Micrococcaceae</taxon>
        <taxon>Arthrobacter</taxon>
    </lineage>
</organism>
<accession>Q9AGP3</accession>
<dbReference type="EC" id="1.5.3.24" evidence="1"/>
<dbReference type="EMBL" id="AF329478">
    <property type="protein sequence ID" value="AAK16487.1"/>
    <property type="molecule type" value="Genomic_DNA"/>
</dbReference>
<dbReference type="SMR" id="Q9AGP3"/>
<dbReference type="GO" id="GO:0005737">
    <property type="term" value="C:cytoplasm"/>
    <property type="evidence" value="ECO:0007669"/>
    <property type="project" value="UniProtKB-SubCell"/>
</dbReference>
<dbReference type="GO" id="GO:0000166">
    <property type="term" value="F:nucleotide binding"/>
    <property type="evidence" value="ECO:0007669"/>
    <property type="project" value="UniProtKB-KW"/>
</dbReference>
<dbReference type="GO" id="GO:0008115">
    <property type="term" value="F:sarcosine oxidase activity"/>
    <property type="evidence" value="ECO:0007669"/>
    <property type="project" value="UniProtKB-EC"/>
</dbReference>
<dbReference type="GO" id="GO:0046653">
    <property type="term" value="P:tetrahydrofolate metabolic process"/>
    <property type="evidence" value="ECO:0007669"/>
    <property type="project" value="InterPro"/>
</dbReference>
<dbReference type="Gene3D" id="3.30.9.10">
    <property type="entry name" value="D-Amino Acid Oxidase, subunit A, domain 2"/>
    <property type="match status" value="1"/>
</dbReference>
<dbReference type="Gene3D" id="3.50.50.60">
    <property type="entry name" value="FAD/NAD(P)-binding domain"/>
    <property type="match status" value="1"/>
</dbReference>
<dbReference type="InterPro" id="IPR006076">
    <property type="entry name" value="FAD-dep_OxRdtase"/>
</dbReference>
<dbReference type="InterPro" id="IPR036188">
    <property type="entry name" value="FAD/NAD-bd_sf"/>
</dbReference>
<dbReference type="InterPro" id="IPR001763">
    <property type="entry name" value="Rhodanese-like_dom"/>
</dbReference>
<dbReference type="InterPro" id="IPR006278">
    <property type="entry name" value="SoxB"/>
</dbReference>
<dbReference type="NCBIfam" id="TIGR01373">
    <property type="entry name" value="soxB"/>
    <property type="match status" value="1"/>
</dbReference>
<dbReference type="PANTHER" id="PTHR13847:SF287">
    <property type="entry name" value="FAD-DEPENDENT OXIDOREDUCTASE DOMAIN-CONTAINING PROTEIN 1"/>
    <property type="match status" value="1"/>
</dbReference>
<dbReference type="PANTHER" id="PTHR13847">
    <property type="entry name" value="SARCOSINE DEHYDROGENASE-RELATED"/>
    <property type="match status" value="1"/>
</dbReference>
<dbReference type="Pfam" id="PF01266">
    <property type="entry name" value="DAO"/>
    <property type="match status" value="1"/>
</dbReference>
<dbReference type="SUPFAM" id="SSF54373">
    <property type="entry name" value="FAD-linked reductases, C-terminal domain"/>
    <property type="match status" value="1"/>
</dbReference>
<dbReference type="SUPFAM" id="SSF51905">
    <property type="entry name" value="FAD/NAD(P)-binding domain"/>
    <property type="match status" value="1"/>
</dbReference>
<comment type="function">
    <text evidence="1 3">In the presence of tetrahydrofolate, catalyzes the oxidative demethylation of sarcosine to yield glycine, 5,10-methylenetetrahydrofolate and hydrogen peroxide (By similarity). In the absence of tetrahydrofolate, catalyzes the oxidative demethylation of sarcosine to yield glycine, formaldehyde and hydrogen peroxide (Ref.1).</text>
</comment>
<comment type="catalytic activity">
    <reaction evidence="1">
        <text>sarcosine + (6S)-5,6,7,8-tetrahydrofolate + O2 = (6R)-5,10-methylene-5,6,7,8-tetrahydrofolate + glycine + H2O2</text>
        <dbReference type="Rhea" id="RHEA:70455"/>
        <dbReference type="ChEBI" id="CHEBI:15379"/>
        <dbReference type="ChEBI" id="CHEBI:15636"/>
        <dbReference type="ChEBI" id="CHEBI:16240"/>
        <dbReference type="ChEBI" id="CHEBI:57305"/>
        <dbReference type="ChEBI" id="CHEBI:57433"/>
        <dbReference type="ChEBI" id="CHEBI:57453"/>
        <dbReference type="EC" id="1.5.3.24"/>
    </reaction>
</comment>
<comment type="catalytic activity">
    <reaction evidence="3">
        <text>sarcosine + O2 + H2O = formaldehyde + glycine + H2O2</text>
        <dbReference type="Rhea" id="RHEA:13313"/>
        <dbReference type="ChEBI" id="CHEBI:15377"/>
        <dbReference type="ChEBI" id="CHEBI:15379"/>
        <dbReference type="ChEBI" id="CHEBI:16240"/>
        <dbReference type="ChEBI" id="CHEBI:16842"/>
        <dbReference type="ChEBI" id="CHEBI:57305"/>
        <dbReference type="ChEBI" id="CHEBI:57433"/>
    </reaction>
</comment>
<comment type="cofactor">
    <cofactor evidence="1">
        <name>FAD</name>
        <dbReference type="ChEBI" id="CHEBI:57692"/>
    </cofactor>
    <text evidence="1">Binds 1 FAD per subunit.</text>
</comment>
<comment type="cofactor">
    <cofactor evidence="1">
        <name>FMN</name>
        <dbReference type="ChEBI" id="CHEBI:58210"/>
    </cofactor>
    <text evidence="1">Binds 1 FMN covalently.</text>
</comment>
<comment type="subunit">
    <text evidence="3">Heterotetramer composed of subunits alpha (SoxA), beta (SoxB), gamma (SoxG) and delta (SoxD).</text>
</comment>
<comment type="subcellular location">
    <subcellularLocation>
        <location evidence="1">Cytoplasm</location>
    </subcellularLocation>
</comment>
<comment type="similarity">
    <text evidence="4">Belongs to the SoxB family.</text>
</comment>
<protein>
    <recommendedName>
        <fullName evidence="4">Sarcosine oxidase subunit beta</fullName>
        <shortName evidence="4">Sarcosine oxidase subunit B</shortName>
        <ecNumber evidence="1">1.5.3.24</ecNumber>
    </recommendedName>
    <alternativeName>
        <fullName evidence="1">Sarcosine oxidase (5,10-methylenetetrahydrofolate-forming) subunit beta</fullName>
    </alternativeName>
    <alternativeName>
        <fullName evidence="4">Tetrameric sarcosine oxidase subunit beta</fullName>
        <shortName evidence="4">TSOX subunit beta</shortName>
    </alternativeName>
</protein>
<name>TSOXB_ARTSP</name>
<proteinExistence type="evidence at protein level"/>
<reference key="1">
    <citation type="journal article" date="1996" name="Biotechnol. Lett.">
        <title>Cloning of genes encoding heterotetrameric sarcosine oxidase from Arthrobacter sp.</title>
        <authorList>
            <person name="Meskys R."/>
            <person name="Rudomanskis R."/>
            <person name="Leipuviene R."/>
        </authorList>
    </citation>
    <scope>NUCLEOTIDE SEQUENCE [GENOMIC DNA]</scope>
    <scope>FUNCTION</scope>
    <scope>CATALYTIC ACTIVITY</scope>
    <scope>SUBUNIT</scope>
    <source>
        <strain>1IN</strain>
    </source>
</reference>
<feature type="chain" id="PRO_0000428957" description="Sarcosine oxidase subunit beta">
    <location>
        <begin position="1"/>
        <end position="405"/>
    </location>
</feature>
<feature type="binding site" evidence="2">
    <location>
        <position position="31"/>
    </location>
    <ligand>
        <name>FAD</name>
        <dbReference type="ChEBI" id="CHEBI:57692"/>
    </ligand>
</feature>
<feature type="binding site" evidence="2">
    <location>
        <position position="32"/>
    </location>
    <ligand>
        <name>FAD</name>
        <dbReference type="ChEBI" id="CHEBI:57692"/>
    </ligand>
</feature>
<feature type="binding site" evidence="2">
    <location>
        <position position="53"/>
    </location>
    <ligand>
        <name>FAD</name>
        <dbReference type="ChEBI" id="CHEBI:57692"/>
    </ligand>
</feature>
<feature type="binding site" evidence="2">
    <location>
        <position position="61"/>
    </location>
    <ligand>
        <name>FAD</name>
        <dbReference type="ChEBI" id="CHEBI:57692"/>
    </ligand>
</feature>
<feature type="binding site" evidence="2">
    <location>
        <position position="62"/>
    </location>
    <ligand>
        <name>FAD</name>
        <dbReference type="ChEBI" id="CHEBI:57692"/>
    </ligand>
</feature>
<feature type="binding site" evidence="2">
    <location>
        <position position="66"/>
    </location>
    <ligand>
        <name>FAD</name>
        <dbReference type="ChEBI" id="CHEBI:57692"/>
    </ligand>
</feature>
<feature type="binding site" evidence="2">
    <location>
        <position position="68"/>
    </location>
    <ligand>
        <name>FAD</name>
        <dbReference type="ChEBI" id="CHEBI:57692"/>
    </ligand>
</feature>
<feature type="binding site" evidence="2">
    <location>
        <position position="197"/>
    </location>
    <ligand>
        <name>FAD</name>
        <dbReference type="ChEBI" id="CHEBI:57692"/>
    </ligand>
</feature>
<feature type="binding site" evidence="2">
    <location>
        <position position="354"/>
    </location>
    <ligand>
        <name>FAD</name>
        <dbReference type="ChEBI" id="CHEBI:57692"/>
    </ligand>
</feature>
<feature type="binding site" evidence="2">
    <location>
        <position position="357"/>
    </location>
    <ligand>
        <name>FAD</name>
        <dbReference type="ChEBI" id="CHEBI:57692"/>
    </ligand>
</feature>
<feature type="binding site" evidence="2">
    <location>
        <position position="359"/>
    </location>
    <ligand>
        <name>FAD</name>
        <dbReference type="ChEBI" id="CHEBI:57692"/>
    </ligand>
</feature>
<feature type="modified residue" description="Tele-8alpha-FMN histidine" evidence="2">
    <location>
        <position position="173"/>
    </location>
</feature>
<sequence>MADLLPEHPEFLWANPEPKKSYDVVIVGGGGHGLATAYYLAKNHGITNVAVLEKGWLAGGNMARNTTIIRSNYLWDESAGIYEKSLKLWEQLPEELDYDFLFSQRGVLNLAHTLGDVRESIRRVEANKFNGVDAEWLTPEQVKEVCPIINIGDDIRYPVMGATYQPRAGIAKHDHVAWAFARKANEMGVDIIQNCEVTGFLKDGEKVTGVKTTRGTIHAGKVALAGAGHSSVLAELAGFELPIQSHPLQALVSELFEPVHPTVVMSNHIHVYVSQAHKGELVMGAGIDTYNGYGQRGAFHVIEEQMAAAVELFPIFARAHVLRTWGGIVDTTMDALPIISKTPIQNLYVNCGWGTGGFKGTPGAGFTLAHTIANDEAHALNAPFSLERFETGHLIDEHGAAAVAH</sequence>
<gene>
    <name type="primary">soxB</name>
</gene>
<keyword id="KW-0963">Cytoplasm</keyword>
<keyword id="KW-0274">FAD</keyword>
<keyword id="KW-0285">Flavoprotein</keyword>
<keyword id="KW-0288">FMN</keyword>
<keyword id="KW-0547">Nucleotide-binding</keyword>
<keyword id="KW-0560">Oxidoreductase</keyword>
<evidence type="ECO:0000250" key="1">
    <source>
        <dbReference type="UniProtKB" id="P40875"/>
    </source>
</evidence>
<evidence type="ECO:0000250" key="2">
    <source>
        <dbReference type="UniProtKB" id="Q50LF2"/>
    </source>
</evidence>
<evidence type="ECO:0000269" key="3">
    <source ref="1"/>
</evidence>
<evidence type="ECO:0000305" key="4"/>